<accession>B2UQM8</accession>
<comment type="function">
    <text evidence="1">Binds to the 23S rRNA.</text>
</comment>
<comment type="subunit">
    <text evidence="1">Part of the 50S ribosomal subunit.</text>
</comment>
<comment type="similarity">
    <text evidence="1">Belongs to the universal ribosomal protein uL15 family.</text>
</comment>
<sequence>MLQLHTIKPNPGAKHRKKRLGNGESSGLGKTCGKGNKGQKARSGGTIRPGFEGGQMPLHRRLPKKGFNNTRFQDKILIVNLSQLERVFEAGATVDENTLRAAKLVQGPCDAVKLLGNGTLTKNLNVVVDFVSASAREKVTQAGGTVTVLSEA</sequence>
<reference key="1">
    <citation type="journal article" date="2011" name="PLoS ONE">
        <title>The genome of Akkermansia muciniphila, a dedicated intestinal mucin degrader, and its use in exploring intestinal metagenomes.</title>
        <authorList>
            <person name="van Passel M.W."/>
            <person name="Kant R."/>
            <person name="Zoetendal E.G."/>
            <person name="Plugge C.M."/>
            <person name="Derrien M."/>
            <person name="Malfatti S.A."/>
            <person name="Chain P.S."/>
            <person name="Woyke T."/>
            <person name="Palva A."/>
            <person name="de Vos W.M."/>
            <person name="Smidt H."/>
        </authorList>
    </citation>
    <scope>NUCLEOTIDE SEQUENCE [LARGE SCALE GENOMIC DNA]</scope>
    <source>
        <strain>ATCC BAA-835 / DSM 22959 / JCM 33894 / BCRC 81048 / CCUG 64013 / CIP 107961 / Muc</strain>
    </source>
</reference>
<evidence type="ECO:0000255" key="1">
    <source>
        <dbReference type="HAMAP-Rule" id="MF_01341"/>
    </source>
</evidence>
<evidence type="ECO:0000256" key="2">
    <source>
        <dbReference type="SAM" id="MobiDB-lite"/>
    </source>
</evidence>
<evidence type="ECO:0000305" key="3"/>
<feature type="chain" id="PRO_1000142765" description="Large ribosomal subunit protein uL15">
    <location>
        <begin position="1"/>
        <end position="152"/>
    </location>
</feature>
<feature type="region of interest" description="Disordered" evidence="2">
    <location>
        <begin position="1"/>
        <end position="66"/>
    </location>
</feature>
<feature type="compositionally biased region" description="Gly residues" evidence="2">
    <location>
        <begin position="24"/>
        <end position="36"/>
    </location>
</feature>
<gene>
    <name evidence="1" type="primary">rplO</name>
    <name type="ordered locus">Amuc_0931</name>
</gene>
<dbReference type="EMBL" id="CP001071">
    <property type="protein sequence ID" value="ACD04763.1"/>
    <property type="molecule type" value="Genomic_DNA"/>
</dbReference>
<dbReference type="RefSeq" id="WP_012419978.1">
    <property type="nucleotide sequence ID" value="NZ_CP071807.1"/>
</dbReference>
<dbReference type="SMR" id="B2UQM8"/>
<dbReference type="STRING" id="349741.Amuc_0931"/>
<dbReference type="PaxDb" id="349741-Amuc_0931"/>
<dbReference type="GeneID" id="60880180"/>
<dbReference type="KEGG" id="amu:Amuc_0931"/>
<dbReference type="eggNOG" id="COG0200">
    <property type="taxonomic scope" value="Bacteria"/>
</dbReference>
<dbReference type="HOGENOM" id="CLU_055188_4_2_0"/>
<dbReference type="OrthoDB" id="9810293at2"/>
<dbReference type="BioCyc" id="AMUC349741:G1GBX-1005-MONOMER"/>
<dbReference type="Proteomes" id="UP000001031">
    <property type="component" value="Chromosome"/>
</dbReference>
<dbReference type="GO" id="GO:0022625">
    <property type="term" value="C:cytosolic large ribosomal subunit"/>
    <property type="evidence" value="ECO:0007669"/>
    <property type="project" value="TreeGrafter"/>
</dbReference>
<dbReference type="GO" id="GO:0019843">
    <property type="term" value="F:rRNA binding"/>
    <property type="evidence" value="ECO:0007669"/>
    <property type="project" value="UniProtKB-UniRule"/>
</dbReference>
<dbReference type="GO" id="GO:0003735">
    <property type="term" value="F:structural constituent of ribosome"/>
    <property type="evidence" value="ECO:0007669"/>
    <property type="project" value="InterPro"/>
</dbReference>
<dbReference type="GO" id="GO:0006412">
    <property type="term" value="P:translation"/>
    <property type="evidence" value="ECO:0007669"/>
    <property type="project" value="UniProtKB-UniRule"/>
</dbReference>
<dbReference type="Gene3D" id="3.100.10.10">
    <property type="match status" value="1"/>
</dbReference>
<dbReference type="HAMAP" id="MF_01341">
    <property type="entry name" value="Ribosomal_uL15"/>
    <property type="match status" value="1"/>
</dbReference>
<dbReference type="InterPro" id="IPR030878">
    <property type="entry name" value="Ribosomal_uL15"/>
</dbReference>
<dbReference type="InterPro" id="IPR021131">
    <property type="entry name" value="Ribosomal_uL15/eL18"/>
</dbReference>
<dbReference type="InterPro" id="IPR036227">
    <property type="entry name" value="Ribosomal_uL15/eL18_sf"/>
</dbReference>
<dbReference type="InterPro" id="IPR005749">
    <property type="entry name" value="Ribosomal_uL15_bac-type"/>
</dbReference>
<dbReference type="InterPro" id="IPR001196">
    <property type="entry name" value="Ribosomal_uL15_CS"/>
</dbReference>
<dbReference type="NCBIfam" id="TIGR01071">
    <property type="entry name" value="rplO_bact"/>
    <property type="match status" value="1"/>
</dbReference>
<dbReference type="PANTHER" id="PTHR12934">
    <property type="entry name" value="50S RIBOSOMAL PROTEIN L15"/>
    <property type="match status" value="1"/>
</dbReference>
<dbReference type="PANTHER" id="PTHR12934:SF11">
    <property type="entry name" value="LARGE RIBOSOMAL SUBUNIT PROTEIN UL15M"/>
    <property type="match status" value="1"/>
</dbReference>
<dbReference type="Pfam" id="PF00828">
    <property type="entry name" value="Ribosomal_L27A"/>
    <property type="match status" value="1"/>
</dbReference>
<dbReference type="SUPFAM" id="SSF52080">
    <property type="entry name" value="Ribosomal proteins L15p and L18e"/>
    <property type="match status" value="1"/>
</dbReference>
<dbReference type="PROSITE" id="PS00475">
    <property type="entry name" value="RIBOSOMAL_L15"/>
    <property type="match status" value="1"/>
</dbReference>
<name>RL15_AKKM8</name>
<protein>
    <recommendedName>
        <fullName evidence="1">Large ribosomal subunit protein uL15</fullName>
    </recommendedName>
    <alternativeName>
        <fullName evidence="3">50S ribosomal protein L15</fullName>
    </alternativeName>
</protein>
<organism>
    <name type="scientific">Akkermansia muciniphila (strain ATCC BAA-835 / DSM 22959 / JCM 33894 / BCRC 81048 / CCUG 64013 / CIP 107961 / Muc)</name>
    <dbReference type="NCBI Taxonomy" id="349741"/>
    <lineage>
        <taxon>Bacteria</taxon>
        <taxon>Pseudomonadati</taxon>
        <taxon>Verrucomicrobiota</taxon>
        <taxon>Verrucomicrobiia</taxon>
        <taxon>Verrucomicrobiales</taxon>
        <taxon>Akkermansiaceae</taxon>
        <taxon>Akkermansia</taxon>
    </lineage>
</organism>
<proteinExistence type="inferred from homology"/>
<keyword id="KW-1185">Reference proteome</keyword>
<keyword id="KW-0687">Ribonucleoprotein</keyword>
<keyword id="KW-0689">Ribosomal protein</keyword>
<keyword id="KW-0694">RNA-binding</keyword>
<keyword id="KW-0699">rRNA-binding</keyword>